<reference evidence="9" key="1">
    <citation type="journal article" date="2002" name="J. Interferon Cytokine Res.">
        <title>Genomic structure of the mouse 2',5'-oligoadenylate synthetase gene family.</title>
        <authorList>
            <person name="Kakuta S."/>
            <person name="Shibata S."/>
            <person name="Iwakura Y."/>
        </authorList>
    </citation>
    <scope>NUCLEOTIDE SEQUENCE [MRNA]</scope>
    <scope>FUNCTION</scope>
    <source>
        <strain evidence="9">C57BL/6J</strain>
        <tissue evidence="9">Ovary</tissue>
    </source>
</reference>
<reference evidence="8" key="2">
    <citation type="journal article" date="2002" name="Proc. Natl. Acad. Sci. U.S.A.">
        <title>Positional cloning of the murine flavivirus resistance gene.</title>
        <authorList>
            <person name="Perelygin A.A."/>
            <person name="Scherbik S.V."/>
            <person name="Zhulin I.B."/>
            <person name="Stockman B.M."/>
            <person name="Li Y."/>
            <person name="Brinton M.A."/>
        </authorList>
    </citation>
    <scope>NUCLEOTIDE SEQUENCE [MRNA]</scope>
    <source>
        <strain evidence="8">C3H/RV</strain>
    </source>
</reference>
<reference evidence="10" key="3">
    <citation type="journal article" date="2005" name="Science">
        <title>The transcriptional landscape of the mammalian genome.</title>
        <authorList>
            <person name="Carninci P."/>
            <person name="Kasukawa T."/>
            <person name="Katayama S."/>
            <person name="Gough J."/>
            <person name="Frith M.C."/>
            <person name="Maeda N."/>
            <person name="Oyama R."/>
            <person name="Ravasi T."/>
            <person name="Lenhard B."/>
            <person name="Wells C."/>
            <person name="Kodzius R."/>
            <person name="Shimokawa K."/>
            <person name="Bajic V.B."/>
            <person name="Brenner S.E."/>
            <person name="Batalov S."/>
            <person name="Forrest A.R."/>
            <person name="Zavolan M."/>
            <person name="Davis M.J."/>
            <person name="Wilming L.G."/>
            <person name="Aidinis V."/>
            <person name="Allen J.E."/>
            <person name="Ambesi-Impiombato A."/>
            <person name="Apweiler R."/>
            <person name="Aturaliya R.N."/>
            <person name="Bailey T.L."/>
            <person name="Bansal M."/>
            <person name="Baxter L."/>
            <person name="Beisel K.W."/>
            <person name="Bersano T."/>
            <person name="Bono H."/>
            <person name="Chalk A.M."/>
            <person name="Chiu K.P."/>
            <person name="Choudhary V."/>
            <person name="Christoffels A."/>
            <person name="Clutterbuck D.R."/>
            <person name="Crowe M.L."/>
            <person name="Dalla E."/>
            <person name="Dalrymple B.P."/>
            <person name="de Bono B."/>
            <person name="Della Gatta G."/>
            <person name="di Bernardo D."/>
            <person name="Down T."/>
            <person name="Engstrom P."/>
            <person name="Fagiolini M."/>
            <person name="Faulkner G."/>
            <person name="Fletcher C.F."/>
            <person name="Fukushima T."/>
            <person name="Furuno M."/>
            <person name="Futaki S."/>
            <person name="Gariboldi M."/>
            <person name="Georgii-Hemming P."/>
            <person name="Gingeras T.R."/>
            <person name="Gojobori T."/>
            <person name="Green R.E."/>
            <person name="Gustincich S."/>
            <person name="Harbers M."/>
            <person name="Hayashi Y."/>
            <person name="Hensch T.K."/>
            <person name="Hirokawa N."/>
            <person name="Hill D."/>
            <person name="Huminiecki L."/>
            <person name="Iacono M."/>
            <person name="Ikeo K."/>
            <person name="Iwama A."/>
            <person name="Ishikawa T."/>
            <person name="Jakt M."/>
            <person name="Kanapin A."/>
            <person name="Katoh M."/>
            <person name="Kawasawa Y."/>
            <person name="Kelso J."/>
            <person name="Kitamura H."/>
            <person name="Kitano H."/>
            <person name="Kollias G."/>
            <person name="Krishnan S.P."/>
            <person name="Kruger A."/>
            <person name="Kummerfeld S.K."/>
            <person name="Kurochkin I.V."/>
            <person name="Lareau L.F."/>
            <person name="Lazarevic D."/>
            <person name="Lipovich L."/>
            <person name="Liu J."/>
            <person name="Liuni S."/>
            <person name="McWilliam S."/>
            <person name="Madan Babu M."/>
            <person name="Madera M."/>
            <person name="Marchionni L."/>
            <person name="Matsuda H."/>
            <person name="Matsuzawa S."/>
            <person name="Miki H."/>
            <person name="Mignone F."/>
            <person name="Miyake S."/>
            <person name="Morris K."/>
            <person name="Mottagui-Tabar S."/>
            <person name="Mulder N."/>
            <person name="Nakano N."/>
            <person name="Nakauchi H."/>
            <person name="Ng P."/>
            <person name="Nilsson R."/>
            <person name="Nishiguchi S."/>
            <person name="Nishikawa S."/>
            <person name="Nori F."/>
            <person name="Ohara O."/>
            <person name="Okazaki Y."/>
            <person name="Orlando V."/>
            <person name="Pang K.C."/>
            <person name="Pavan W.J."/>
            <person name="Pavesi G."/>
            <person name="Pesole G."/>
            <person name="Petrovsky N."/>
            <person name="Piazza S."/>
            <person name="Reed J."/>
            <person name="Reid J.F."/>
            <person name="Ring B.Z."/>
            <person name="Ringwald M."/>
            <person name="Rost B."/>
            <person name="Ruan Y."/>
            <person name="Salzberg S.L."/>
            <person name="Sandelin A."/>
            <person name="Schneider C."/>
            <person name="Schoenbach C."/>
            <person name="Sekiguchi K."/>
            <person name="Semple C.A."/>
            <person name="Seno S."/>
            <person name="Sessa L."/>
            <person name="Sheng Y."/>
            <person name="Shibata Y."/>
            <person name="Shimada H."/>
            <person name="Shimada K."/>
            <person name="Silva D."/>
            <person name="Sinclair B."/>
            <person name="Sperling S."/>
            <person name="Stupka E."/>
            <person name="Sugiura K."/>
            <person name="Sultana R."/>
            <person name="Takenaka Y."/>
            <person name="Taki K."/>
            <person name="Tammoja K."/>
            <person name="Tan S.L."/>
            <person name="Tang S."/>
            <person name="Taylor M.S."/>
            <person name="Tegner J."/>
            <person name="Teichmann S.A."/>
            <person name="Ueda H.R."/>
            <person name="van Nimwegen E."/>
            <person name="Verardo R."/>
            <person name="Wei C.L."/>
            <person name="Yagi K."/>
            <person name="Yamanishi H."/>
            <person name="Zabarovsky E."/>
            <person name="Zhu S."/>
            <person name="Zimmer A."/>
            <person name="Hide W."/>
            <person name="Bult C."/>
            <person name="Grimmond S.M."/>
            <person name="Teasdale R.D."/>
            <person name="Liu E.T."/>
            <person name="Brusic V."/>
            <person name="Quackenbush J."/>
            <person name="Wahlestedt C."/>
            <person name="Mattick J.S."/>
            <person name="Hume D.A."/>
            <person name="Kai C."/>
            <person name="Sasaki D."/>
            <person name="Tomaru Y."/>
            <person name="Fukuda S."/>
            <person name="Kanamori-Katayama M."/>
            <person name="Suzuki M."/>
            <person name="Aoki J."/>
            <person name="Arakawa T."/>
            <person name="Iida J."/>
            <person name="Imamura K."/>
            <person name="Itoh M."/>
            <person name="Kato T."/>
            <person name="Kawaji H."/>
            <person name="Kawagashira N."/>
            <person name="Kawashima T."/>
            <person name="Kojima M."/>
            <person name="Kondo S."/>
            <person name="Konno H."/>
            <person name="Nakano K."/>
            <person name="Ninomiya N."/>
            <person name="Nishio T."/>
            <person name="Okada M."/>
            <person name="Plessy C."/>
            <person name="Shibata K."/>
            <person name="Shiraki T."/>
            <person name="Suzuki S."/>
            <person name="Tagami M."/>
            <person name="Waki K."/>
            <person name="Watahiki A."/>
            <person name="Okamura-Oho Y."/>
            <person name="Suzuki H."/>
            <person name="Kawai J."/>
            <person name="Hayashizaki Y."/>
        </authorList>
    </citation>
    <scope>NUCLEOTIDE SEQUENCE [LARGE SCALE MRNA]</scope>
    <source>
        <strain evidence="10">C57BL/6J</strain>
        <tissue evidence="10">Ovary</tissue>
    </source>
</reference>
<reference evidence="13" key="4">
    <citation type="journal article" date="2009" name="PLoS Biol.">
        <title>Lineage-specific biology revealed by a finished genome assembly of the mouse.</title>
        <authorList>
            <person name="Church D.M."/>
            <person name="Goodstadt L."/>
            <person name="Hillier L.W."/>
            <person name="Zody M.C."/>
            <person name="Goldstein S."/>
            <person name="She X."/>
            <person name="Bult C.J."/>
            <person name="Agarwala R."/>
            <person name="Cherry J.L."/>
            <person name="DiCuccio M."/>
            <person name="Hlavina W."/>
            <person name="Kapustin Y."/>
            <person name="Meric P."/>
            <person name="Maglott D."/>
            <person name="Birtle Z."/>
            <person name="Marques A.C."/>
            <person name="Graves T."/>
            <person name="Zhou S."/>
            <person name="Teague B."/>
            <person name="Potamousis K."/>
            <person name="Churas C."/>
            <person name="Place M."/>
            <person name="Herschleb J."/>
            <person name="Runnheim R."/>
            <person name="Forrest D."/>
            <person name="Amos-Landgraf J."/>
            <person name="Schwartz D.C."/>
            <person name="Cheng Z."/>
            <person name="Lindblad-Toh K."/>
            <person name="Eichler E.E."/>
            <person name="Ponting C.P."/>
        </authorList>
    </citation>
    <scope>NUCLEOTIDE SEQUENCE [LARGE SCALE GENOMIC DNA]</scope>
    <source>
        <strain evidence="13">C57BL/6J</strain>
    </source>
</reference>
<reference evidence="11" key="5">
    <citation type="submission" date="2005-09" db="EMBL/GenBank/DDBJ databases">
        <authorList>
            <person name="Mural R.J."/>
            <person name="Adams M.D."/>
            <person name="Myers E.W."/>
            <person name="Smith H.O."/>
            <person name="Venter J.C."/>
        </authorList>
    </citation>
    <scope>NUCLEOTIDE SEQUENCE [LARGE SCALE GENOMIC DNA]</scope>
</reference>
<reference evidence="7" key="6">
    <citation type="journal article" date="2004" name="Genome Res.">
        <title>The status, quality, and expansion of the NIH full-length cDNA project: the Mammalian Gene Collection (MGC).</title>
        <authorList>
            <consortium name="The MGC Project Team"/>
        </authorList>
    </citation>
    <scope>NUCLEOTIDE SEQUENCE [LARGE SCALE MRNA]</scope>
    <source>
        <strain evidence="7">C57BL/6J</strain>
        <tissue evidence="7">Egg</tissue>
    </source>
</reference>
<reference evidence="6" key="7">
    <citation type="journal article" date="2005" name="Mol. Cell. Biol.">
        <title>Mice deficient in oocyte-specific oligoadenylate synthetase-like protein OAS1D display reduced fertility.</title>
        <authorList>
            <person name="Yan W."/>
            <person name="Ma L."/>
            <person name="Stein P."/>
            <person name="Pangas S.A."/>
            <person name="Burns K.H."/>
            <person name="Bai Y."/>
            <person name="Schultz R.M."/>
            <person name="Matzuk M.M."/>
        </authorList>
    </citation>
    <scope>FUNCTION</scope>
    <scope>INTERACTION WITH OAS1A</scope>
    <scope>SUBCELLULAR LOCATION</scope>
    <scope>TISSUE SPECIFICITY</scope>
    <scope>DEVELOPMENTAL STAGE</scope>
    <scope>DISRUPTION PHENOTYPE</scope>
</reference>
<reference evidence="6" key="8">
    <citation type="journal article" date="2007" name="BMC Dev. Biol.">
        <title>Ovarian gene expression in the absence of FIGLA, an oocyte-specific transcription factor.</title>
        <authorList>
            <person name="Joshi S."/>
            <person name="Davies H."/>
            <person name="Sims L.P."/>
            <person name="Levy S.E."/>
            <person name="Dean J."/>
        </authorList>
    </citation>
    <scope>TISSUE SPECIFICITY</scope>
    <scope>DEVELOPMENTAL STAGE</scope>
</reference>
<reference evidence="6" key="9">
    <citation type="journal article" date="2016" name="Infect. Genet. Evol.">
        <title>The role of mouse 2',5'-oligoadenylate synthetase 1 paralogs.</title>
        <authorList>
            <person name="Elkhateeb E."/>
            <person name="Tag-El-Din-Hassan H.T."/>
            <person name="Sasaki N."/>
            <person name="Torigoe D."/>
            <person name="Morimatsu M."/>
            <person name="Agui T."/>
        </authorList>
    </citation>
    <scope>TISSUE SPECIFICITY</scope>
    <scope>DEVELOPMENTAL STAGE</scope>
    <scope>INDUCTION</scope>
</reference>
<evidence type="ECO:0000269" key="1">
    <source>
    </source>
</evidence>
<evidence type="ECO:0000269" key="2">
    <source>
    </source>
</evidence>
<evidence type="ECO:0000269" key="3">
    <source>
    </source>
</evidence>
<evidence type="ECO:0000269" key="4">
    <source>
    </source>
</evidence>
<evidence type="ECO:0000303" key="5">
    <source>
    </source>
</evidence>
<evidence type="ECO:0000305" key="6"/>
<evidence type="ECO:0000312" key="7">
    <source>
        <dbReference type="EMBL" id="AAH52835.1"/>
    </source>
</evidence>
<evidence type="ECO:0000312" key="8">
    <source>
        <dbReference type="EMBL" id="AAL12825.1"/>
    </source>
</evidence>
<evidence type="ECO:0000312" key="9">
    <source>
        <dbReference type="EMBL" id="BAB84132.1"/>
    </source>
</evidence>
<evidence type="ECO:0000312" key="10">
    <source>
        <dbReference type="EMBL" id="BAC35788.1"/>
    </source>
</evidence>
<evidence type="ECO:0000312" key="11">
    <source>
        <dbReference type="EMBL" id="EDL19742.1"/>
    </source>
</evidence>
<evidence type="ECO:0000312" key="12">
    <source>
        <dbReference type="MGI" id="MGI:2140770"/>
    </source>
</evidence>
<evidence type="ECO:0000312" key="13">
    <source>
        <dbReference type="Proteomes" id="UP000000589"/>
    </source>
</evidence>
<proteinExistence type="evidence at protein level"/>
<comment type="function">
    <text evidence="1 2">Does not have 2'-5'-oligoadenylate synthetase activity, but can bind double-stranded RNA (PubMed:12396720, PubMed:15899864). May play a role in the control of female fertility, possibly by binding to and inhibiting OAS1A (PubMed:15899864).</text>
</comment>
<comment type="subunit">
    <text evidence="2">Interacts with OAS1A, the interaction inhibits OAS1A catalytic activity.</text>
</comment>
<comment type="subcellular location">
    <subcellularLocation>
        <location evidence="2">Cytoplasm</location>
    </subcellularLocation>
</comment>
<comment type="tissue specificity">
    <text evidence="2 3 4">Expressed specifically in oocytes (at protein level) (PubMed:15899864). Expressed at highest level in ovary with lesser amounts in intestine, brain, thymus lung, kidney, liver and uterus (PubMed:17567914, PubMed:27663720).</text>
</comment>
<comment type="developmental stage">
    <text evidence="2 3 4">Detected in fully grown, germinal vesicle (GV)-intact oocytes and in oocytes at the metaphase II stage, with levels decreasing thereafter (at protein level) (PubMed:15899864). Detected 1 week after birth in developing ovary (PubMed:27663720). Detected at 17.5 dpc, with levels increasing thereafter (PubMed:17567914).</text>
</comment>
<comment type="induction">
    <text evidence="2 4">Unlike other OAS1 proteins, not induced by polyinosinic:polycytidylic acid (poly I:C).</text>
</comment>
<comment type="disruption phenotype">
    <text evidence="2">Newborn mice are viable. Female mice display reduced fertility due to deficiencies in ovarian follicle development, reduced efficiency of ovulation, and the arrest of fertilized eggs at one-cell stage.</text>
</comment>
<comment type="similarity">
    <text evidence="6">Belongs to the 2-5A synthase family.</text>
</comment>
<accession>Q8VI95</accession>
<accession>Q3UWZ6</accession>
<accession>Q7TPY2</accession>
<keyword id="KW-0963">Cytoplasm</keyword>
<keyword id="KW-1185">Reference proteome</keyword>
<keyword id="KW-0694">RNA-binding</keyword>
<protein>
    <recommendedName>
        <fullName evidence="6">Inactive 2'-5'-oligoadenylate synthase 1D</fullName>
    </recommendedName>
</protein>
<feature type="chain" id="PRO_0000440962" description="Inactive 2'-5'-oligoadenylate synthase 1D">
    <location>
        <begin position="1"/>
        <end position="361"/>
    </location>
</feature>
<feature type="sequence conflict" description="In Ref. 6; AAH52835." evidence="6" ref="6">
    <original>V</original>
    <variation>A</variation>
    <location>
        <position position="60"/>
    </location>
</feature>
<feature type="sequence conflict" description="In Ref. 1; BAE22768." evidence="6" ref="1">
    <original>G</original>
    <variation>W</variation>
    <location>
        <position position="230"/>
    </location>
</feature>
<name>OAS1D_MOUSE</name>
<dbReference type="EMBL" id="AB067532">
    <property type="protein sequence ID" value="BAB84132.1"/>
    <property type="molecule type" value="mRNA"/>
</dbReference>
<dbReference type="EMBL" id="AY055829">
    <property type="protein sequence ID" value="AAL12825.1"/>
    <property type="molecule type" value="mRNA"/>
</dbReference>
<dbReference type="EMBL" id="AK054465">
    <property type="protein sequence ID" value="BAC35788.1"/>
    <property type="molecule type" value="mRNA"/>
</dbReference>
<dbReference type="EMBL" id="AK136001">
    <property type="protein sequence ID" value="BAE22768.1"/>
    <property type="molecule type" value="mRNA"/>
</dbReference>
<dbReference type="EMBL" id="AC015535">
    <property type="status" value="NOT_ANNOTATED_CDS"/>
    <property type="molecule type" value="Genomic_DNA"/>
</dbReference>
<dbReference type="EMBL" id="CH466529">
    <property type="protein sequence ID" value="EDL19742.1"/>
    <property type="molecule type" value="Genomic_DNA"/>
</dbReference>
<dbReference type="EMBL" id="BC052835">
    <property type="protein sequence ID" value="AAH52835.1"/>
    <property type="molecule type" value="mRNA"/>
</dbReference>
<dbReference type="CCDS" id="CCDS19631.1"/>
<dbReference type="RefSeq" id="NP_598654.1">
    <property type="nucleotide sequence ID" value="NM_133893.3"/>
</dbReference>
<dbReference type="SMR" id="Q8VI95"/>
<dbReference type="FunCoup" id="Q8VI95">
    <property type="interactions" value="9"/>
</dbReference>
<dbReference type="STRING" id="10090.ENSMUSP00000048054"/>
<dbReference type="PaxDb" id="10090-ENSMUSP00000048054"/>
<dbReference type="DNASU" id="100535"/>
<dbReference type="Ensembl" id="ENSMUST00000044224.5">
    <property type="protein sequence ID" value="ENSMUSP00000048054.5"/>
    <property type="gene ID" value="ENSMUSG00000032623.10"/>
</dbReference>
<dbReference type="GeneID" id="100535"/>
<dbReference type="KEGG" id="mmu:100535"/>
<dbReference type="UCSC" id="uc008zik.2">
    <property type="organism name" value="mouse"/>
</dbReference>
<dbReference type="AGR" id="MGI:2140770"/>
<dbReference type="CTD" id="100535"/>
<dbReference type="MGI" id="MGI:2140770">
    <property type="gene designation" value="Oas1d"/>
</dbReference>
<dbReference type="VEuPathDB" id="HostDB:ENSMUSG00000032623"/>
<dbReference type="eggNOG" id="KOG0001">
    <property type="taxonomic scope" value="Eukaryota"/>
</dbReference>
<dbReference type="GeneTree" id="ENSGT00510000046406"/>
<dbReference type="HOGENOM" id="CLU_040930_0_0_1"/>
<dbReference type="InParanoid" id="Q8VI95"/>
<dbReference type="OMA" id="RIYWTWC"/>
<dbReference type="OrthoDB" id="1885901at2759"/>
<dbReference type="PhylomeDB" id="Q8VI95"/>
<dbReference type="TreeFam" id="TF329749"/>
<dbReference type="BRENDA" id="2.7.7.84">
    <property type="organism ID" value="3474"/>
</dbReference>
<dbReference type="BioGRID-ORCS" id="100535">
    <property type="hits" value="1 hit in 77 CRISPR screens"/>
</dbReference>
<dbReference type="PRO" id="PR:Q8VI95"/>
<dbReference type="Proteomes" id="UP000000589">
    <property type="component" value="Chromosome 5"/>
</dbReference>
<dbReference type="RNAct" id="Q8VI95">
    <property type="molecule type" value="protein"/>
</dbReference>
<dbReference type="Bgee" id="ENSMUSG00000032623">
    <property type="expression patterns" value="Expressed in secondary oocyte and 11 other cell types or tissues"/>
</dbReference>
<dbReference type="GO" id="GO:0005737">
    <property type="term" value="C:cytoplasm"/>
    <property type="evidence" value="ECO:0000314"/>
    <property type="project" value="MGI"/>
</dbReference>
<dbReference type="GO" id="GO:0003725">
    <property type="term" value="F:double-stranded RNA binding"/>
    <property type="evidence" value="ECO:0000314"/>
    <property type="project" value="UniProtKB"/>
</dbReference>
<dbReference type="GO" id="GO:0004857">
    <property type="term" value="F:enzyme inhibitor activity"/>
    <property type="evidence" value="ECO:0000314"/>
    <property type="project" value="MGI"/>
</dbReference>
<dbReference type="GO" id="GO:0001541">
    <property type="term" value="P:ovarian follicle development"/>
    <property type="evidence" value="ECO:0000315"/>
    <property type="project" value="MGI"/>
</dbReference>
<dbReference type="GO" id="GO:0001542">
    <property type="term" value="P:ovulation from ovarian follicle"/>
    <property type="evidence" value="ECO:0000315"/>
    <property type="project" value="MGI"/>
</dbReference>
<dbReference type="FunFam" id="1.10.1410.20:FF:000003">
    <property type="entry name" value="2'-5' oligoadenylate synthetase 1E"/>
    <property type="match status" value="1"/>
</dbReference>
<dbReference type="FunFam" id="3.30.460.10:FF:000007">
    <property type="entry name" value="2'-5'-oligoadenylate synthetase 1"/>
    <property type="match status" value="1"/>
</dbReference>
<dbReference type="Gene3D" id="1.10.1410.20">
    <property type="entry name" value="2'-5'-oligoadenylate synthetase 1, domain 2"/>
    <property type="match status" value="1"/>
</dbReference>
<dbReference type="Gene3D" id="3.30.460.10">
    <property type="entry name" value="Beta Polymerase, domain 2"/>
    <property type="match status" value="1"/>
</dbReference>
<dbReference type="InterPro" id="IPR018952">
    <property type="entry name" value="2-5-oligoAdlate_synth_1_dom2/C"/>
</dbReference>
<dbReference type="InterPro" id="IPR043519">
    <property type="entry name" value="NT_sf"/>
</dbReference>
<dbReference type="PANTHER" id="PTHR11258:SF17">
    <property type="entry name" value="2'-5' OLIGOADENYLATE SYNTHETASE 1E-RELATED"/>
    <property type="match status" value="1"/>
</dbReference>
<dbReference type="PANTHER" id="PTHR11258">
    <property type="entry name" value="2-5 OLIGOADENYLATE SYNTHETASE"/>
    <property type="match status" value="1"/>
</dbReference>
<dbReference type="Pfam" id="PF10421">
    <property type="entry name" value="OAS1_C"/>
    <property type="match status" value="1"/>
</dbReference>
<dbReference type="SUPFAM" id="SSF81301">
    <property type="entry name" value="Nucleotidyltransferase"/>
    <property type="match status" value="1"/>
</dbReference>
<dbReference type="SUPFAM" id="SSF81631">
    <property type="entry name" value="PAP/OAS1 substrate-binding domain"/>
    <property type="match status" value="1"/>
</dbReference>
<dbReference type="PROSITE" id="PS50152">
    <property type="entry name" value="25A_SYNTH_3"/>
    <property type="match status" value="1"/>
</dbReference>
<sequence length="361" mass="42831">MARELFRTPIWRLDKFIEDQLLPDTTFLTELRADIDSISAFLMERCFQGAAHPVRVSRVVMGGCYNEYTVLKGRSEANMVVFLINLTSFEDQFNGQVVFIEEIWRHLLQLQQEKLCKLKFEVQSPKEPNSRFLSFKLSCPERQHELEFDVQPAYDALYEVRHFKPFDSSNYNKVYAQLTHECTTLEKEGEFSICFTDLHQSFLRYRAPKLWNLIRLVKHWYQLCKEKLRGPLPPQYALELLTVYVWEYGIHENPGLHTAQCFRTVLELVTKYKRLRIYWTWCYDFQHEISDYLQGQIKKARPLILDPADPTRNVAGSDLQAWDLLAKEAQIWIDSTFFTNHDMSIVEAWEVMPERQECVFL</sequence>
<gene>
    <name evidence="12" type="primary">Oas1d</name>
    <name evidence="5" type="synonym">Oasl8</name>
</gene>
<organism evidence="10">
    <name type="scientific">Mus musculus</name>
    <name type="common">Mouse</name>
    <dbReference type="NCBI Taxonomy" id="10090"/>
    <lineage>
        <taxon>Eukaryota</taxon>
        <taxon>Metazoa</taxon>
        <taxon>Chordata</taxon>
        <taxon>Craniata</taxon>
        <taxon>Vertebrata</taxon>
        <taxon>Euteleostomi</taxon>
        <taxon>Mammalia</taxon>
        <taxon>Eutheria</taxon>
        <taxon>Euarchontoglires</taxon>
        <taxon>Glires</taxon>
        <taxon>Rodentia</taxon>
        <taxon>Myomorpha</taxon>
        <taxon>Muroidea</taxon>
        <taxon>Muridae</taxon>
        <taxon>Murinae</taxon>
        <taxon>Mus</taxon>
        <taxon>Mus</taxon>
    </lineage>
</organism>